<gene>
    <name type="primary">SGE1</name>
    <name type="synonym">NOR1</name>
    <name type="ordered locus">YPR198W</name>
    <name type="ORF">P9677.3</name>
</gene>
<sequence length="543" mass="59426">MKSTLSLTLCVISLLLTLFLAALDIVIVVTLYDTIGIKFHDFGNIGWLVTGYALSNAVFMLLWGRLAEILGTKECLMISVIVFEIGSLISALSNSMATLISGRVVAGFGGSGIESLAFVVGTSIVRENHRGIMITALAISYVIAEGVGPFIGGAFNEHLSWRWCFYINLPIGAFAFIILAFCNTSGEPHQKMWLPSKIKKIMNYDYGELLKASFWKNTFEVLVFKLDMVGIILSSAGFTLLMLGLSFGGNNFPWNSGIIICFFTVGPILLLLFCAYDFHFLSLSGLHYDNKRIKPLLTWNIASNCGIFTSSITGFLSCFAYELQSAYLVQLYQLVFKKKPTLASIHLWELSIPAMIATMAIAYLNSKYGIIKPAIVFGVLCGIVGSGLFTLINGELSQSIGYSILPGIAFGSIFQATLLSSQVQITSDDPDFQNKFIEVTAFNSFAKSLGFAFGGNMGAMIFTASLKNQMRSSQLNIPQFTSVETLLAYSTEHYDGPQSSLSKFINTAIHDVFYCALGCYALSFFFGIFTSSKKTTISAKKQQ</sequence>
<accession>P33335</accession>
<accession>D6W4J6</accession>
<accession>Q05720</accession>
<dbReference type="EMBL" id="L11640">
    <property type="protein sequence ID" value="AAA35043.1"/>
    <property type="molecule type" value="Genomic_DNA"/>
</dbReference>
<dbReference type="EMBL" id="U02077">
    <property type="protein sequence ID" value="AAA52190.1"/>
    <property type="molecule type" value="Genomic_DNA"/>
</dbReference>
<dbReference type="EMBL" id="L24961">
    <property type="protein sequence ID" value="AAA65606.1"/>
    <property type="molecule type" value="Genomic_DNA"/>
</dbReference>
<dbReference type="EMBL" id="X77765">
    <property type="protein sequence ID" value="CAA54805.1"/>
    <property type="molecule type" value="Genomic_DNA"/>
</dbReference>
<dbReference type="EMBL" id="U25841">
    <property type="protein sequence ID" value="AAB64626.1"/>
    <property type="molecule type" value="Genomic_DNA"/>
</dbReference>
<dbReference type="EMBL" id="BK006949">
    <property type="protein sequence ID" value="DAA11612.1"/>
    <property type="molecule type" value="Genomic_DNA"/>
</dbReference>
<dbReference type="PIR" id="S40888">
    <property type="entry name" value="S40888"/>
</dbReference>
<dbReference type="RefSeq" id="NP_015524.1">
    <property type="nucleotide sequence ID" value="NM_001184295.1"/>
</dbReference>
<dbReference type="SMR" id="P33335"/>
<dbReference type="BioGRID" id="36368">
    <property type="interactions" value="72"/>
</dbReference>
<dbReference type="DIP" id="DIP-7575N"/>
<dbReference type="FunCoup" id="P33335">
    <property type="interactions" value="61"/>
</dbReference>
<dbReference type="IntAct" id="P33335">
    <property type="interactions" value="3"/>
</dbReference>
<dbReference type="MINT" id="P33335"/>
<dbReference type="STRING" id="4932.YPR198W"/>
<dbReference type="TCDB" id="2.A.1.3.54">
    <property type="family name" value="the major facilitator superfamily (mfs)"/>
</dbReference>
<dbReference type="iPTMnet" id="P33335"/>
<dbReference type="PaxDb" id="4932-YPR198W"/>
<dbReference type="PeptideAtlas" id="P33335"/>
<dbReference type="EnsemblFungi" id="YPR198W_mRNA">
    <property type="protein sequence ID" value="YPR198W"/>
    <property type="gene ID" value="YPR198W"/>
</dbReference>
<dbReference type="GeneID" id="856327"/>
<dbReference type="KEGG" id="sce:YPR198W"/>
<dbReference type="AGR" id="SGD:S000006402"/>
<dbReference type="SGD" id="S000006402">
    <property type="gene designation" value="SGE1"/>
</dbReference>
<dbReference type="VEuPathDB" id="FungiDB:YPR198W"/>
<dbReference type="eggNOG" id="KOG0254">
    <property type="taxonomic scope" value="Eukaryota"/>
</dbReference>
<dbReference type="GeneTree" id="ENSGT00940000176547"/>
<dbReference type="HOGENOM" id="CLU_000960_22_1_1"/>
<dbReference type="InParanoid" id="P33335"/>
<dbReference type="OMA" id="IVMARIN"/>
<dbReference type="OrthoDB" id="10021397at2759"/>
<dbReference type="BioCyc" id="YEAST:G3O-34318-MONOMER"/>
<dbReference type="BioGRID-ORCS" id="856327">
    <property type="hits" value="9 hits in 10 CRISPR screens"/>
</dbReference>
<dbReference type="PRO" id="PR:P33335"/>
<dbReference type="Proteomes" id="UP000002311">
    <property type="component" value="Chromosome XVI"/>
</dbReference>
<dbReference type="RNAct" id="P33335">
    <property type="molecule type" value="protein"/>
</dbReference>
<dbReference type="GO" id="GO:0005783">
    <property type="term" value="C:endoplasmic reticulum"/>
    <property type="evidence" value="ECO:0007005"/>
    <property type="project" value="SGD"/>
</dbReference>
<dbReference type="GO" id="GO:0005886">
    <property type="term" value="C:plasma membrane"/>
    <property type="evidence" value="ECO:0000314"/>
    <property type="project" value="SGD"/>
</dbReference>
<dbReference type="GO" id="GO:0022857">
    <property type="term" value="F:transmembrane transporter activity"/>
    <property type="evidence" value="ECO:0000318"/>
    <property type="project" value="GO_Central"/>
</dbReference>
<dbReference type="GO" id="GO:0042910">
    <property type="term" value="F:xenobiotic transmembrane transporter activity"/>
    <property type="evidence" value="ECO:0000315"/>
    <property type="project" value="SGD"/>
</dbReference>
<dbReference type="GO" id="GO:0055085">
    <property type="term" value="P:transmembrane transport"/>
    <property type="evidence" value="ECO:0000315"/>
    <property type="project" value="SGD"/>
</dbReference>
<dbReference type="CDD" id="cd17502">
    <property type="entry name" value="MFS_Azr1_MDR_like"/>
    <property type="match status" value="1"/>
</dbReference>
<dbReference type="FunFam" id="1.20.1250.20:FF:000373">
    <property type="entry name" value="Vacuolar basic amino acid transporter"/>
    <property type="match status" value="1"/>
</dbReference>
<dbReference type="Gene3D" id="1.20.1250.20">
    <property type="entry name" value="MFS general substrate transporter like domains"/>
    <property type="match status" value="1"/>
</dbReference>
<dbReference type="Gene3D" id="1.20.1720.10">
    <property type="entry name" value="Multidrug resistance protein D"/>
    <property type="match status" value="1"/>
</dbReference>
<dbReference type="InterPro" id="IPR011701">
    <property type="entry name" value="MFS"/>
</dbReference>
<dbReference type="InterPro" id="IPR020846">
    <property type="entry name" value="MFS_dom"/>
</dbReference>
<dbReference type="InterPro" id="IPR036259">
    <property type="entry name" value="MFS_trans_sf"/>
</dbReference>
<dbReference type="PANTHER" id="PTHR23501:SF198">
    <property type="entry name" value="AZOLE RESISTANCE PROTEIN 1-RELATED"/>
    <property type="match status" value="1"/>
</dbReference>
<dbReference type="PANTHER" id="PTHR23501">
    <property type="entry name" value="MAJOR FACILITATOR SUPERFAMILY"/>
    <property type="match status" value="1"/>
</dbReference>
<dbReference type="Pfam" id="PF07690">
    <property type="entry name" value="MFS_1"/>
    <property type="match status" value="1"/>
</dbReference>
<dbReference type="SUPFAM" id="SSF103473">
    <property type="entry name" value="MFS general substrate transporter"/>
    <property type="match status" value="1"/>
</dbReference>
<dbReference type="PROSITE" id="PS50850">
    <property type="entry name" value="MFS"/>
    <property type="match status" value="1"/>
</dbReference>
<feature type="chain" id="PRO_0000173422" description="Protein SGE1">
    <location>
        <begin position="1"/>
        <end position="543"/>
    </location>
</feature>
<feature type="topological domain" description="Cytoplasmic" evidence="1">
    <location>
        <begin position="1"/>
        <end position="8"/>
    </location>
</feature>
<feature type="transmembrane region" description="Helical" evidence="1">
    <location>
        <begin position="9"/>
        <end position="29"/>
    </location>
</feature>
<feature type="topological domain" description="Extracellular" evidence="1">
    <location>
        <begin position="30"/>
        <end position="41"/>
    </location>
</feature>
<feature type="transmembrane region" description="Helical" evidence="1">
    <location>
        <begin position="42"/>
        <end position="62"/>
    </location>
</feature>
<feature type="topological domain" description="Cytoplasmic" evidence="1">
    <location>
        <begin position="63"/>
        <end position="79"/>
    </location>
</feature>
<feature type="transmembrane region" description="Helical" evidence="1">
    <location>
        <begin position="80"/>
        <end position="100"/>
    </location>
</feature>
<feature type="topological domain" description="Extracellular" evidence="1">
    <location>
        <begin position="101"/>
        <end position="103"/>
    </location>
</feature>
<feature type="transmembrane region" description="Helical" evidence="1">
    <location>
        <begin position="104"/>
        <end position="124"/>
    </location>
</feature>
<feature type="topological domain" description="Cytoplasmic" evidence="1">
    <location>
        <begin position="125"/>
        <end position="131"/>
    </location>
</feature>
<feature type="transmembrane region" description="Helical" evidence="1">
    <location>
        <begin position="132"/>
        <end position="152"/>
    </location>
</feature>
<feature type="topological domain" description="Extracellular" evidence="1">
    <location>
        <begin position="153"/>
        <end position="162"/>
    </location>
</feature>
<feature type="transmembrane region" description="Helical" evidence="1">
    <location>
        <begin position="163"/>
        <end position="183"/>
    </location>
</feature>
<feature type="topological domain" description="Cytoplasmic" evidence="1">
    <location>
        <begin position="184"/>
        <end position="227"/>
    </location>
</feature>
<feature type="transmembrane region" description="Helical" evidence="1">
    <location>
        <begin position="228"/>
        <end position="248"/>
    </location>
</feature>
<feature type="topological domain" description="Extracellular" evidence="1">
    <location>
        <begin position="249"/>
        <end position="255"/>
    </location>
</feature>
<feature type="transmembrane region" description="Helical" evidence="1">
    <location>
        <begin position="256"/>
        <end position="276"/>
    </location>
</feature>
<feature type="topological domain" description="Cytoplasmic" evidence="1">
    <location>
        <begin position="277"/>
        <end position="300"/>
    </location>
</feature>
<feature type="transmembrane region" description="Helical" evidence="1">
    <location>
        <begin position="301"/>
        <end position="321"/>
    </location>
</feature>
<feature type="topological domain" description="Extracellular" evidence="1">
    <location>
        <begin position="322"/>
        <end position="341"/>
    </location>
</feature>
<feature type="transmembrane region" description="Helical" evidence="1">
    <location>
        <begin position="342"/>
        <end position="362"/>
    </location>
</feature>
<feature type="topological domain" description="Cytoplasmic" evidence="1">
    <location>
        <begin position="363"/>
        <end position="373"/>
    </location>
</feature>
<feature type="transmembrane region" description="Helical" evidence="1">
    <location>
        <begin position="374"/>
        <end position="394"/>
    </location>
</feature>
<feature type="topological domain" description="Extracellular" evidence="1">
    <location>
        <begin position="395"/>
        <end position="399"/>
    </location>
</feature>
<feature type="transmembrane region" description="Helical" evidence="1">
    <location>
        <begin position="400"/>
        <end position="420"/>
    </location>
</feature>
<feature type="topological domain" description="Cytoplasmic" evidence="1">
    <location>
        <begin position="421"/>
        <end position="443"/>
    </location>
</feature>
<feature type="transmembrane region" description="Helical" evidence="1">
    <location>
        <begin position="444"/>
        <end position="464"/>
    </location>
</feature>
<feature type="topological domain" description="Extracellular" evidence="1">
    <location>
        <begin position="465"/>
        <end position="508"/>
    </location>
</feature>
<feature type="transmembrane region" description="Helical" evidence="1">
    <location>
        <begin position="509"/>
        <end position="529"/>
    </location>
</feature>
<feature type="topological domain" description="Cytoplasmic" evidence="1">
    <location>
        <begin position="530"/>
        <end position="543"/>
    </location>
</feature>
<feature type="sequence conflict" description="In Ref. 3; AAA65606." evidence="2" ref="3">
    <original>D</original>
    <variation>G</variation>
    <location>
        <position position="429"/>
    </location>
</feature>
<feature type="sequence conflict" description="In Ref. 3; AAA65606." evidence="2" ref="3">
    <original>KSLGFAFGGNMGAMIFTASLKNQMRSSQLNIPQFTSVETL</original>
    <variation>NPWALRLEGYGGNDIHCITQKPDALFPIKHTTIYVCRNT</variation>
    <location>
        <begin position="447"/>
        <end position="486"/>
    </location>
</feature>
<comment type="function">
    <text>Drug export permease. Multi-copy suppressor of loss-of-function mutation of GAL11. Involved specifically in transcription of GAL4-dependent genes. Can link GAL4 with the basal transcription machinery if GAL11 is missing. Confers resistance to 10-N-nonyl acridine orange (NAO) and in general to cationic dyes.</text>
</comment>
<comment type="subcellular location">
    <subcellularLocation>
        <location>Membrane</location>
        <topology>Multi-pass membrane protein</topology>
    </subcellularLocation>
</comment>
<comment type="similarity">
    <text evidence="2">Belongs to the major facilitator superfamily.</text>
</comment>
<keyword id="KW-0472">Membrane</keyword>
<keyword id="KW-1185">Reference proteome</keyword>
<keyword id="KW-0812">Transmembrane</keyword>
<keyword id="KW-1133">Transmembrane helix</keyword>
<keyword id="KW-0813">Transport</keyword>
<proteinExistence type="evidence at protein level"/>
<reference key="1">
    <citation type="journal article" date="1993" name="Genetics">
        <title>Isolation and characterization of SGE1: a yeast gene that partially suppresses the gal11 mutation in multiple copies.</title>
        <authorList>
            <person name="Amakasu H."/>
            <person name="Suzuki Y."/>
            <person name="Nishizawa M."/>
            <person name="Fukasawa T."/>
        </authorList>
    </citation>
    <scope>NUCLEOTIDE SEQUENCE [GENOMIC DNA]</scope>
</reference>
<reference key="2">
    <citation type="journal article" date="1994" name="Mol. Gen. Genet.">
        <title>The Saccharomyces cerevisiae SGE1 gene product: a novel drug-resistance protein within the major facilitator superfamily.</title>
        <authorList>
            <person name="Ehrenhofer-Murray A.E."/>
            <person name="Wuergler F.E."/>
            <person name="Sengstag C."/>
        </authorList>
    </citation>
    <scope>NUCLEOTIDE SEQUENCE [GENOMIC DNA]</scope>
    <source>
        <strain>ATCC 204508 / S288c</strain>
    </source>
</reference>
<reference key="3">
    <citation type="submission" date="1993-10" db="EMBL/GenBank/DDBJ databases">
        <title>Membrane protein conferring resistance to drug.</title>
        <authorList>
            <person name="Urdaci M.C."/>
            <person name="Jacquot C."/>
        </authorList>
    </citation>
    <scope>NUCLEOTIDE SEQUENCE [GENOMIC DNA]</scope>
    <source>
        <strain>ATCC 28383 / FL100 / VTT C-80102</strain>
    </source>
</reference>
<reference key="4">
    <citation type="journal article" date="1997" name="Yeast">
        <title>The Saccharomyces cerevisiae MFS superfamily SGE1 gene confers resistance to cationic dyes.</title>
        <authorList>
            <person name="Jacquot C."/>
            <person name="Julien R."/>
            <person name="Guilloton M."/>
        </authorList>
    </citation>
    <scope>NUCLEOTIDE SEQUENCE [GENOMIC DNA]</scope>
</reference>
<reference key="5">
    <citation type="journal article" date="1997" name="Nature">
        <title>The nucleotide sequence of Saccharomyces cerevisiae chromosome XVI.</title>
        <authorList>
            <person name="Bussey H."/>
            <person name="Storms R.K."/>
            <person name="Ahmed A."/>
            <person name="Albermann K."/>
            <person name="Allen E."/>
            <person name="Ansorge W."/>
            <person name="Araujo R."/>
            <person name="Aparicio A."/>
            <person name="Barrell B.G."/>
            <person name="Badcock K."/>
            <person name="Benes V."/>
            <person name="Botstein D."/>
            <person name="Bowman S."/>
            <person name="Brueckner M."/>
            <person name="Carpenter J."/>
            <person name="Cherry J.M."/>
            <person name="Chung E."/>
            <person name="Churcher C.M."/>
            <person name="Coster F."/>
            <person name="Davis K."/>
            <person name="Davis R.W."/>
            <person name="Dietrich F.S."/>
            <person name="Delius H."/>
            <person name="DiPaolo T."/>
            <person name="Dubois E."/>
            <person name="Duesterhoeft A."/>
            <person name="Duncan M."/>
            <person name="Floeth M."/>
            <person name="Fortin N."/>
            <person name="Friesen J.D."/>
            <person name="Fritz C."/>
            <person name="Goffeau A."/>
            <person name="Hall J."/>
            <person name="Hebling U."/>
            <person name="Heumann K."/>
            <person name="Hilbert H."/>
            <person name="Hillier L.W."/>
            <person name="Hunicke-Smith S."/>
            <person name="Hyman R.W."/>
            <person name="Johnston M."/>
            <person name="Kalman S."/>
            <person name="Kleine K."/>
            <person name="Komp C."/>
            <person name="Kurdi O."/>
            <person name="Lashkari D."/>
            <person name="Lew H."/>
            <person name="Lin A."/>
            <person name="Lin D."/>
            <person name="Louis E.J."/>
            <person name="Marathe R."/>
            <person name="Messenguy F."/>
            <person name="Mewes H.-W."/>
            <person name="Mirtipati S."/>
            <person name="Moestl D."/>
            <person name="Mueller-Auer S."/>
            <person name="Namath A."/>
            <person name="Nentwich U."/>
            <person name="Oefner P."/>
            <person name="Pearson D."/>
            <person name="Petel F.X."/>
            <person name="Pohl T.M."/>
            <person name="Purnelle B."/>
            <person name="Rajandream M.A."/>
            <person name="Rechmann S."/>
            <person name="Rieger M."/>
            <person name="Riles L."/>
            <person name="Roberts D."/>
            <person name="Schaefer M."/>
            <person name="Scharfe M."/>
            <person name="Scherens B."/>
            <person name="Schramm S."/>
            <person name="Schroeder M."/>
            <person name="Sdicu A.-M."/>
            <person name="Tettelin H."/>
            <person name="Urrestarazu L.A."/>
            <person name="Ushinsky S."/>
            <person name="Vierendeels F."/>
            <person name="Vissers S."/>
            <person name="Voss H."/>
            <person name="Walsh S.V."/>
            <person name="Wambutt R."/>
            <person name="Wang Y."/>
            <person name="Wedler E."/>
            <person name="Wedler H."/>
            <person name="Winnett E."/>
            <person name="Zhong W.-W."/>
            <person name="Zollner A."/>
            <person name="Vo D.H."/>
            <person name="Hani J."/>
        </authorList>
    </citation>
    <scope>NUCLEOTIDE SEQUENCE [LARGE SCALE GENOMIC DNA]</scope>
    <source>
        <strain>ATCC 204508 / S288c</strain>
    </source>
</reference>
<reference key="6">
    <citation type="journal article" date="2014" name="G3 (Bethesda)">
        <title>The reference genome sequence of Saccharomyces cerevisiae: Then and now.</title>
        <authorList>
            <person name="Engel S.R."/>
            <person name="Dietrich F.S."/>
            <person name="Fisk D.G."/>
            <person name="Binkley G."/>
            <person name="Balakrishnan R."/>
            <person name="Costanzo M.C."/>
            <person name="Dwight S.S."/>
            <person name="Hitz B.C."/>
            <person name="Karra K."/>
            <person name="Nash R.S."/>
            <person name="Weng S."/>
            <person name="Wong E.D."/>
            <person name="Lloyd P."/>
            <person name="Skrzypek M.S."/>
            <person name="Miyasato S.R."/>
            <person name="Simison M."/>
            <person name="Cherry J.M."/>
        </authorList>
    </citation>
    <scope>GENOME REANNOTATION</scope>
    <source>
        <strain>ATCC 204508 / S288c</strain>
    </source>
</reference>
<reference key="7">
    <citation type="journal article" date="1998" name="Yeast">
        <title>The Sge1 protein of Saccharomyces cerevisiae is a membrane-associated multidrug transporter.</title>
        <authorList>
            <person name="Ehrenhofer-Murray A.E."/>
            <person name="Keller Seitz M.U."/>
            <person name="Sengstag C."/>
        </authorList>
    </citation>
    <scope>CHARACTERIZATION</scope>
</reference>
<reference key="8">
    <citation type="journal article" date="2006" name="Proc. Natl. Acad. Sci. U.S.A.">
        <title>A global topology map of the Saccharomyces cerevisiae membrane proteome.</title>
        <authorList>
            <person name="Kim H."/>
            <person name="Melen K."/>
            <person name="Oesterberg M."/>
            <person name="von Heijne G."/>
        </authorList>
    </citation>
    <scope>TOPOLOGY [LARGE SCALE ANALYSIS]</scope>
    <source>
        <strain>ATCC 208353 / W303-1A</strain>
    </source>
</reference>
<name>SGE1_YEAST</name>
<evidence type="ECO:0000255" key="1"/>
<evidence type="ECO:0000305" key="2"/>
<protein>
    <recommendedName>
        <fullName>Protein SGE1</fullName>
    </recommendedName>
    <alternativeName>
        <fullName>10-N-nonyl acridine orange resistance protein</fullName>
    </alternativeName>
    <alternativeName>
        <fullName>Crystal violet resistance protein</fullName>
    </alternativeName>
</protein>
<organism>
    <name type="scientific">Saccharomyces cerevisiae (strain ATCC 204508 / S288c)</name>
    <name type="common">Baker's yeast</name>
    <dbReference type="NCBI Taxonomy" id="559292"/>
    <lineage>
        <taxon>Eukaryota</taxon>
        <taxon>Fungi</taxon>
        <taxon>Dikarya</taxon>
        <taxon>Ascomycota</taxon>
        <taxon>Saccharomycotina</taxon>
        <taxon>Saccharomycetes</taxon>
        <taxon>Saccharomycetales</taxon>
        <taxon>Saccharomycetaceae</taxon>
        <taxon>Saccharomyces</taxon>
    </lineage>
</organism>